<organism>
    <name type="scientific">Xanthomonas oryzae pv. oryzae (strain MAFF 311018)</name>
    <dbReference type="NCBI Taxonomy" id="342109"/>
    <lineage>
        <taxon>Bacteria</taxon>
        <taxon>Pseudomonadati</taxon>
        <taxon>Pseudomonadota</taxon>
        <taxon>Gammaproteobacteria</taxon>
        <taxon>Lysobacterales</taxon>
        <taxon>Lysobacteraceae</taxon>
        <taxon>Xanthomonas</taxon>
    </lineage>
</organism>
<dbReference type="EMBL" id="AP008229">
    <property type="protein sequence ID" value="BAE70165.1"/>
    <property type="molecule type" value="Genomic_DNA"/>
</dbReference>
<dbReference type="RefSeq" id="WP_011260049.1">
    <property type="nucleotide sequence ID" value="NC_007705.1"/>
</dbReference>
<dbReference type="SMR" id="Q2NZW2"/>
<dbReference type="KEGG" id="xom:XOO3410"/>
<dbReference type="HOGENOM" id="CLU_036856_0_1_6"/>
<dbReference type="GO" id="GO:0005737">
    <property type="term" value="C:cytoplasm"/>
    <property type="evidence" value="ECO:0007669"/>
    <property type="project" value="UniProtKB-SubCell"/>
</dbReference>
<dbReference type="GO" id="GO:0016149">
    <property type="term" value="F:translation release factor activity, codon specific"/>
    <property type="evidence" value="ECO:0007669"/>
    <property type="project" value="UniProtKB-UniRule"/>
</dbReference>
<dbReference type="FunFam" id="3.30.160.20:FF:000004">
    <property type="entry name" value="Peptide chain release factor 1"/>
    <property type="match status" value="1"/>
</dbReference>
<dbReference type="FunFam" id="3.30.70.1660:FF:000002">
    <property type="entry name" value="Peptide chain release factor 1"/>
    <property type="match status" value="1"/>
</dbReference>
<dbReference type="FunFam" id="3.30.70.1660:FF:000004">
    <property type="entry name" value="Peptide chain release factor 1"/>
    <property type="match status" value="1"/>
</dbReference>
<dbReference type="Gene3D" id="3.30.160.20">
    <property type="match status" value="1"/>
</dbReference>
<dbReference type="Gene3D" id="3.30.70.1660">
    <property type="match status" value="2"/>
</dbReference>
<dbReference type="Gene3D" id="6.10.140.1950">
    <property type="match status" value="1"/>
</dbReference>
<dbReference type="HAMAP" id="MF_00093">
    <property type="entry name" value="Rel_fac_1"/>
    <property type="match status" value="1"/>
</dbReference>
<dbReference type="InterPro" id="IPR005139">
    <property type="entry name" value="PCRF"/>
</dbReference>
<dbReference type="InterPro" id="IPR000352">
    <property type="entry name" value="Pep_chain_release_fac_I"/>
</dbReference>
<dbReference type="InterPro" id="IPR045853">
    <property type="entry name" value="Pep_chain_release_fac_I_sf"/>
</dbReference>
<dbReference type="InterPro" id="IPR050057">
    <property type="entry name" value="Prokaryotic/Mito_RF"/>
</dbReference>
<dbReference type="InterPro" id="IPR004373">
    <property type="entry name" value="RF-1"/>
</dbReference>
<dbReference type="NCBIfam" id="TIGR00019">
    <property type="entry name" value="prfA"/>
    <property type="match status" value="1"/>
</dbReference>
<dbReference type="NCBIfam" id="NF001859">
    <property type="entry name" value="PRK00591.1"/>
    <property type="match status" value="1"/>
</dbReference>
<dbReference type="PANTHER" id="PTHR43804">
    <property type="entry name" value="LD18447P"/>
    <property type="match status" value="1"/>
</dbReference>
<dbReference type="PANTHER" id="PTHR43804:SF7">
    <property type="entry name" value="LD18447P"/>
    <property type="match status" value="1"/>
</dbReference>
<dbReference type="Pfam" id="PF03462">
    <property type="entry name" value="PCRF"/>
    <property type="match status" value="1"/>
</dbReference>
<dbReference type="Pfam" id="PF00472">
    <property type="entry name" value="RF-1"/>
    <property type="match status" value="1"/>
</dbReference>
<dbReference type="SMART" id="SM00937">
    <property type="entry name" value="PCRF"/>
    <property type="match status" value="1"/>
</dbReference>
<dbReference type="SUPFAM" id="SSF75620">
    <property type="entry name" value="Release factor"/>
    <property type="match status" value="1"/>
</dbReference>
<dbReference type="PROSITE" id="PS00745">
    <property type="entry name" value="RF_PROK_I"/>
    <property type="match status" value="1"/>
</dbReference>
<sequence>MTPTLRRKLEALAERREELQHLLSDPDVVNNNDKFRTLSRELSQLEPVAVALEDEARAKADLSAAEAMRTDPEMRELAEEEIAAAQARLEELDTQLASLLVPRDPRDDGNLFLEVRAGTGGDEAAIFAGDLFRMYARYAERQGWKVEIESDSPGEHGGYKEVVARVVGRGAYSRLKFESGTHRVQRVPATESQGRIHTSAATVAIIPEADDVEEIVINPADLKVDTFRSSGAGGQHVNKTESAIRITHVPSGVVVECQTERSQHANRDKAMKRLKAQLLDTEHSKAAAAQAQTRKLQVGSGDRSQRIRTYSFPQGRITDHRVEGLTLYDLPNIIEGDLDALIARLLHEHQADELARLSDSP</sequence>
<gene>
    <name evidence="1" type="primary">prfA</name>
    <name type="ordered locus">XOO3410</name>
</gene>
<keyword id="KW-0963">Cytoplasm</keyword>
<keyword id="KW-0488">Methylation</keyword>
<keyword id="KW-0648">Protein biosynthesis</keyword>
<name>RF1_XANOM</name>
<evidence type="ECO:0000255" key="1">
    <source>
        <dbReference type="HAMAP-Rule" id="MF_00093"/>
    </source>
</evidence>
<accession>Q2NZW2</accession>
<proteinExistence type="inferred from homology"/>
<protein>
    <recommendedName>
        <fullName evidence="1">Peptide chain release factor 1</fullName>
        <shortName evidence="1">RF-1</shortName>
    </recommendedName>
</protein>
<reference key="1">
    <citation type="journal article" date="2005" name="Jpn. Agric. Res. Q.">
        <title>Genome sequence of Xanthomonas oryzae pv. oryzae suggests contribution of large numbers of effector genes and insertion sequences to its race diversity.</title>
        <authorList>
            <person name="Ochiai H."/>
            <person name="Inoue Y."/>
            <person name="Takeya M."/>
            <person name="Sasaki A."/>
            <person name="Kaku H."/>
        </authorList>
    </citation>
    <scope>NUCLEOTIDE SEQUENCE [LARGE SCALE GENOMIC DNA]</scope>
    <source>
        <strain>MAFF 311018</strain>
    </source>
</reference>
<feature type="chain" id="PRO_0000263394" description="Peptide chain release factor 1">
    <location>
        <begin position="1"/>
        <end position="361"/>
    </location>
</feature>
<feature type="modified residue" description="N5-methylglutamine" evidence="1">
    <location>
        <position position="235"/>
    </location>
</feature>
<comment type="function">
    <text evidence="1">Peptide chain release factor 1 directs the termination of translation in response to the peptide chain termination codons UAG and UAA.</text>
</comment>
<comment type="subcellular location">
    <subcellularLocation>
        <location evidence="1">Cytoplasm</location>
    </subcellularLocation>
</comment>
<comment type="PTM">
    <text evidence="1">Methylated by PrmC. Methylation increases the termination efficiency of RF1.</text>
</comment>
<comment type="similarity">
    <text evidence="1">Belongs to the prokaryotic/mitochondrial release factor family.</text>
</comment>